<accession>A5IV34</accession>
<sequence length="220" mass="23806">MTKGILGRKIGMTQVFGENGELIPVTVVEAKENVVLQKKTVEVDGYNAIQVGFEDKKAYKKDAKSNKYANKPAEGHAKKADAAPKRFIREFRNVDVDAYEVGQEVSVDTFVAGDVIDVTGVSKGKGFQGAIKRHGQSRGPMSHSSHFHRAPDSVGMASDASRVFKGQKMPGRMGGNTVTVQNLEVVQVDTENKVILVKGNVPGPKKGLVEIRTSIKKGNK</sequence>
<gene>
    <name evidence="1" type="primary">rplC</name>
    <name type="ordered locus">SaurJH9_2277</name>
</gene>
<keyword id="KW-0687">Ribonucleoprotein</keyword>
<keyword id="KW-0689">Ribosomal protein</keyword>
<keyword id="KW-0694">RNA-binding</keyword>
<keyword id="KW-0699">rRNA-binding</keyword>
<feature type="chain" id="PRO_1000086464" description="Large ribosomal subunit protein uL3">
    <location>
        <begin position="1"/>
        <end position="220"/>
    </location>
</feature>
<feature type="region of interest" description="Disordered" evidence="2">
    <location>
        <begin position="127"/>
        <end position="155"/>
    </location>
</feature>
<protein>
    <recommendedName>
        <fullName evidence="1">Large ribosomal subunit protein uL3</fullName>
    </recommendedName>
    <alternativeName>
        <fullName evidence="3">50S ribosomal protein L3</fullName>
    </alternativeName>
</protein>
<proteinExistence type="inferred from homology"/>
<dbReference type="EMBL" id="CP000703">
    <property type="protein sequence ID" value="ABQ50057.1"/>
    <property type="molecule type" value="Genomic_DNA"/>
</dbReference>
<dbReference type="RefSeq" id="WP_000160215.1">
    <property type="nucleotide sequence ID" value="NC_009487.1"/>
</dbReference>
<dbReference type="SMR" id="A5IV34"/>
<dbReference type="KEGG" id="saj:SaurJH9_2277"/>
<dbReference type="HOGENOM" id="CLU_044142_4_1_9"/>
<dbReference type="GO" id="GO:0022625">
    <property type="term" value="C:cytosolic large ribosomal subunit"/>
    <property type="evidence" value="ECO:0007669"/>
    <property type="project" value="TreeGrafter"/>
</dbReference>
<dbReference type="GO" id="GO:0019843">
    <property type="term" value="F:rRNA binding"/>
    <property type="evidence" value="ECO:0007669"/>
    <property type="project" value="UniProtKB-UniRule"/>
</dbReference>
<dbReference type="GO" id="GO:0003735">
    <property type="term" value="F:structural constituent of ribosome"/>
    <property type="evidence" value="ECO:0007669"/>
    <property type="project" value="InterPro"/>
</dbReference>
<dbReference type="GO" id="GO:0006412">
    <property type="term" value="P:translation"/>
    <property type="evidence" value="ECO:0007669"/>
    <property type="project" value="UniProtKB-UniRule"/>
</dbReference>
<dbReference type="FunFam" id="2.40.30.10:FF:000004">
    <property type="entry name" value="50S ribosomal protein L3"/>
    <property type="match status" value="1"/>
</dbReference>
<dbReference type="FunFam" id="3.30.160.810:FF:000002">
    <property type="entry name" value="50S ribosomal protein L3"/>
    <property type="match status" value="1"/>
</dbReference>
<dbReference type="Gene3D" id="3.30.160.810">
    <property type="match status" value="1"/>
</dbReference>
<dbReference type="Gene3D" id="2.40.30.10">
    <property type="entry name" value="Translation factors"/>
    <property type="match status" value="1"/>
</dbReference>
<dbReference type="HAMAP" id="MF_01325_B">
    <property type="entry name" value="Ribosomal_uL3_B"/>
    <property type="match status" value="1"/>
</dbReference>
<dbReference type="InterPro" id="IPR000597">
    <property type="entry name" value="Ribosomal_uL3"/>
</dbReference>
<dbReference type="InterPro" id="IPR019927">
    <property type="entry name" value="Ribosomal_uL3_bac/org-type"/>
</dbReference>
<dbReference type="InterPro" id="IPR019926">
    <property type="entry name" value="Ribosomal_uL3_CS"/>
</dbReference>
<dbReference type="InterPro" id="IPR009000">
    <property type="entry name" value="Transl_B-barrel_sf"/>
</dbReference>
<dbReference type="NCBIfam" id="TIGR03625">
    <property type="entry name" value="L3_bact"/>
    <property type="match status" value="1"/>
</dbReference>
<dbReference type="PANTHER" id="PTHR11229">
    <property type="entry name" value="50S RIBOSOMAL PROTEIN L3"/>
    <property type="match status" value="1"/>
</dbReference>
<dbReference type="PANTHER" id="PTHR11229:SF16">
    <property type="entry name" value="LARGE RIBOSOMAL SUBUNIT PROTEIN UL3C"/>
    <property type="match status" value="1"/>
</dbReference>
<dbReference type="Pfam" id="PF00297">
    <property type="entry name" value="Ribosomal_L3"/>
    <property type="match status" value="1"/>
</dbReference>
<dbReference type="SUPFAM" id="SSF50447">
    <property type="entry name" value="Translation proteins"/>
    <property type="match status" value="1"/>
</dbReference>
<dbReference type="PROSITE" id="PS00474">
    <property type="entry name" value="RIBOSOMAL_L3"/>
    <property type="match status" value="1"/>
</dbReference>
<reference key="1">
    <citation type="submission" date="2007-05" db="EMBL/GenBank/DDBJ databases">
        <title>Complete sequence of chromosome of Staphylococcus aureus subsp. aureus JH9.</title>
        <authorList>
            <consortium name="US DOE Joint Genome Institute"/>
            <person name="Copeland A."/>
            <person name="Lucas S."/>
            <person name="Lapidus A."/>
            <person name="Barry K."/>
            <person name="Detter J.C."/>
            <person name="Glavina del Rio T."/>
            <person name="Hammon N."/>
            <person name="Israni S."/>
            <person name="Pitluck S."/>
            <person name="Chain P."/>
            <person name="Malfatti S."/>
            <person name="Shin M."/>
            <person name="Vergez L."/>
            <person name="Schmutz J."/>
            <person name="Larimer F."/>
            <person name="Land M."/>
            <person name="Hauser L."/>
            <person name="Kyrpides N."/>
            <person name="Kim E."/>
            <person name="Tomasz A."/>
            <person name="Richardson P."/>
        </authorList>
    </citation>
    <scope>NUCLEOTIDE SEQUENCE [LARGE SCALE GENOMIC DNA]</scope>
    <source>
        <strain>JH9</strain>
    </source>
</reference>
<organism>
    <name type="scientific">Staphylococcus aureus (strain JH9)</name>
    <dbReference type="NCBI Taxonomy" id="359786"/>
    <lineage>
        <taxon>Bacteria</taxon>
        <taxon>Bacillati</taxon>
        <taxon>Bacillota</taxon>
        <taxon>Bacilli</taxon>
        <taxon>Bacillales</taxon>
        <taxon>Staphylococcaceae</taxon>
        <taxon>Staphylococcus</taxon>
    </lineage>
</organism>
<evidence type="ECO:0000255" key="1">
    <source>
        <dbReference type="HAMAP-Rule" id="MF_01325"/>
    </source>
</evidence>
<evidence type="ECO:0000256" key="2">
    <source>
        <dbReference type="SAM" id="MobiDB-lite"/>
    </source>
</evidence>
<evidence type="ECO:0000305" key="3"/>
<name>RL3_STAA9</name>
<comment type="function">
    <text evidence="1">One of the primary rRNA binding proteins, it binds directly near the 3'-end of the 23S rRNA, where it nucleates assembly of the 50S subunit.</text>
</comment>
<comment type="subunit">
    <text evidence="1">Part of the 50S ribosomal subunit. Forms a cluster with proteins L14 and L19.</text>
</comment>
<comment type="similarity">
    <text evidence="1">Belongs to the universal ribosomal protein uL3 family.</text>
</comment>